<comment type="function">
    <text evidence="2">Initiates the repair of damaged proteins by catalyzing methyl esterification of L-isoaspartyl and D-aspartyl residues produced by spontaneous isomerization and racemization of L-aspartyl and L-asparaginyl residues in aging peptides and proteins (By similarity). Acts on EIF4EBP2, microtubule-associated protein 2, calreticulin, clathrin light chains a and b, Ubiquitin C-terminal hydrolase isozyme L1, phosphatidylethanolamine-binding protein 1, stathmin, beta-synuclein and alpha-synuclein (By similarity).</text>
</comment>
<comment type="catalytic activity">
    <reaction evidence="2">
        <text>[protein]-L-isoaspartate + S-adenosyl-L-methionine = [protein]-L-isoaspartate alpha-methyl ester + S-adenosyl-L-homocysteine</text>
        <dbReference type="Rhea" id="RHEA:12705"/>
        <dbReference type="Rhea" id="RHEA-COMP:12143"/>
        <dbReference type="Rhea" id="RHEA-COMP:12144"/>
        <dbReference type="ChEBI" id="CHEBI:57856"/>
        <dbReference type="ChEBI" id="CHEBI:59789"/>
        <dbReference type="ChEBI" id="CHEBI:90596"/>
        <dbReference type="ChEBI" id="CHEBI:90598"/>
        <dbReference type="EC" id="2.1.1.77"/>
    </reaction>
    <physiologicalReaction direction="left-to-right" evidence="2">
        <dbReference type="Rhea" id="RHEA:12706"/>
    </physiologicalReaction>
</comment>
<comment type="subunit">
    <text evidence="1">Monomer.</text>
</comment>
<comment type="subcellular location">
    <subcellularLocation>
        <location evidence="1">Cytoplasm</location>
        <location evidence="1">Cytosol</location>
    </subcellularLocation>
</comment>
<comment type="similarity">
    <text evidence="4">Belongs to the methyltransferase superfamily. L-isoaspartyl/D-aspartyl protein methyltransferase family.</text>
</comment>
<comment type="sequence caution" evidence="4">
    <conflict type="erroneous initiation">
        <sequence resource="EMBL-CDS" id="BAA02034"/>
    </conflict>
</comment>
<dbReference type="EC" id="2.1.1.77" evidence="2"/>
<dbReference type="EMBL" id="M26686">
    <property type="protein sequence ID" value="AAA60742.1"/>
    <property type="molecule type" value="mRNA"/>
</dbReference>
<dbReference type="EMBL" id="D11475">
    <property type="protein sequence ID" value="BAA02034.1"/>
    <property type="status" value="ALT_INIT"/>
    <property type="molecule type" value="mRNA"/>
</dbReference>
<dbReference type="EMBL" id="BC088417">
    <property type="protein sequence ID" value="AAH88417.1"/>
    <property type="molecule type" value="mRNA"/>
</dbReference>
<dbReference type="PIR" id="A32449">
    <property type="entry name" value="A32449"/>
</dbReference>
<dbReference type="RefSeq" id="NP_037205.2">
    <property type="nucleotide sequence ID" value="NM_013073.3"/>
</dbReference>
<dbReference type="SMR" id="P22062"/>
<dbReference type="FunCoup" id="P22062">
    <property type="interactions" value="1620"/>
</dbReference>
<dbReference type="IntAct" id="P22062">
    <property type="interactions" value="1"/>
</dbReference>
<dbReference type="MINT" id="P22062"/>
<dbReference type="STRING" id="10116.ENSRNOP00000019623"/>
<dbReference type="iPTMnet" id="P22062"/>
<dbReference type="PhosphoSitePlus" id="P22062"/>
<dbReference type="jPOST" id="P22062"/>
<dbReference type="PaxDb" id="10116-ENSRNOP00000019623"/>
<dbReference type="GeneID" id="25604"/>
<dbReference type="KEGG" id="rno:25604"/>
<dbReference type="UCSC" id="RGD:3268">
    <property type="organism name" value="rat"/>
</dbReference>
<dbReference type="AGR" id="RGD:3268"/>
<dbReference type="CTD" id="5110"/>
<dbReference type="RGD" id="3268">
    <property type="gene designation" value="Pcmt1"/>
</dbReference>
<dbReference type="eggNOG" id="KOG1661">
    <property type="taxonomic scope" value="Eukaryota"/>
</dbReference>
<dbReference type="HOGENOM" id="CLU_055432_0_0_1"/>
<dbReference type="InParanoid" id="P22062"/>
<dbReference type="PhylomeDB" id="P22062"/>
<dbReference type="Reactome" id="R-RNO-5676934">
    <property type="pathway name" value="Protein repair"/>
</dbReference>
<dbReference type="PRO" id="PR:P22062"/>
<dbReference type="Proteomes" id="UP000002494">
    <property type="component" value="Unplaced"/>
</dbReference>
<dbReference type="GO" id="GO:0016323">
    <property type="term" value="C:basolateral plasma membrane"/>
    <property type="evidence" value="ECO:0000314"/>
    <property type="project" value="RGD"/>
</dbReference>
<dbReference type="GO" id="GO:0031526">
    <property type="term" value="C:brush border membrane"/>
    <property type="evidence" value="ECO:0000314"/>
    <property type="project" value="RGD"/>
</dbReference>
<dbReference type="GO" id="GO:0005737">
    <property type="term" value="C:cytoplasm"/>
    <property type="evidence" value="ECO:0000318"/>
    <property type="project" value="GO_Central"/>
</dbReference>
<dbReference type="GO" id="GO:0005829">
    <property type="term" value="C:cytosol"/>
    <property type="evidence" value="ECO:0007669"/>
    <property type="project" value="UniProtKB-SubCell"/>
</dbReference>
<dbReference type="GO" id="GO:0005615">
    <property type="term" value="C:extracellular space"/>
    <property type="evidence" value="ECO:0000314"/>
    <property type="project" value="RGD"/>
</dbReference>
<dbReference type="GO" id="GO:0043204">
    <property type="term" value="C:perikaryon"/>
    <property type="evidence" value="ECO:0000314"/>
    <property type="project" value="RGD"/>
</dbReference>
<dbReference type="GO" id="GO:0004719">
    <property type="term" value="F:protein-L-isoaspartate (D-aspartate) O-methyltransferase activity"/>
    <property type="evidence" value="ECO:0000314"/>
    <property type="project" value="RGD"/>
</dbReference>
<dbReference type="GO" id="GO:0008757">
    <property type="term" value="F:S-adenosylmethionine-dependent methyltransferase activity"/>
    <property type="evidence" value="ECO:0000314"/>
    <property type="project" value="RGD"/>
</dbReference>
<dbReference type="GO" id="GO:0071456">
    <property type="term" value="P:cellular response to hypoxia"/>
    <property type="evidence" value="ECO:0000270"/>
    <property type="project" value="RGD"/>
</dbReference>
<dbReference type="GO" id="GO:0032259">
    <property type="term" value="P:methylation"/>
    <property type="evidence" value="ECO:0007669"/>
    <property type="project" value="UniProtKB-KW"/>
</dbReference>
<dbReference type="GO" id="GO:0010667">
    <property type="term" value="P:negative regulation of cardiac muscle cell apoptotic process"/>
    <property type="evidence" value="ECO:0000315"/>
    <property type="project" value="RGD"/>
</dbReference>
<dbReference type="GO" id="GO:0036211">
    <property type="term" value="P:protein modification process"/>
    <property type="evidence" value="ECO:0007669"/>
    <property type="project" value="InterPro"/>
</dbReference>
<dbReference type="GO" id="GO:0045471">
    <property type="term" value="P:response to ethanol"/>
    <property type="evidence" value="ECO:0000270"/>
    <property type="project" value="RGD"/>
</dbReference>
<dbReference type="GO" id="GO:0046498">
    <property type="term" value="P:S-adenosylhomocysteine metabolic process"/>
    <property type="evidence" value="ECO:0000314"/>
    <property type="project" value="RGD"/>
</dbReference>
<dbReference type="GO" id="GO:0046500">
    <property type="term" value="P:S-adenosylmethionine metabolic process"/>
    <property type="evidence" value="ECO:0000314"/>
    <property type="project" value="RGD"/>
</dbReference>
<dbReference type="CDD" id="cd02440">
    <property type="entry name" value="AdoMet_MTases"/>
    <property type="match status" value="1"/>
</dbReference>
<dbReference type="FunFam" id="3.40.50.150:FF:000027">
    <property type="entry name" value="Protein-L-isoaspartate O-methyltransferase"/>
    <property type="match status" value="1"/>
</dbReference>
<dbReference type="Gene3D" id="3.40.50.150">
    <property type="entry name" value="Vaccinia Virus protein VP39"/>
    <property type="match status" value="1"/>
</dbReference>
<dbReference type="InterPro" id="IPR000682">
    <property type="entry name" value="PCMT"/>
</dbReference>
<dbReference type="InterPro" id="IPR029063">
    <property type="entry name" value="SAM-dependent_MTases_sf"/>
</dbReference>
<dbReference type="NCBIfam" id="TIGR00080">
    <property type="entry name" value="pimt"/>
    <property type="match status" value="1"/>
</dbReference>
<dbReference type="PANTHER" id="PTHR11579">
    <property type="entry name" value="PROTEIN-L-ISOASPARTATE O-METHYLTRANSFERASE"/>
    <property type="match status" value="1"/>
</dbReference>
<dbReference type="PANTHER" id="PTHR11579:SF7">
    <property type="entry name" value="PROTEIN-L-ISOASPARTATE(D-ASPARTATE) O-METHYLTRANSFERASE"/>
    <property type="match status" value="1"/>
</dbReference>
<dbReference type="Pfam" id="PF01135">
    <property type="entry name" value="PCMT"/>
    <property type="match status" value="1"/>
</dbReference>
<dbReference type="SUPFAM" id="SSF53335">
    <property type="entry name" value="S-adenosyl-L-methionine-dependent methyltransferases"/>
    <property type="match status" value="1"/>
</dbReference>
<dbReference type="PROSITE" id="PS01279">
    <property type="entry name" value="PCMT"/>
    <property type="match status" value="1"/>
</dbReference>
<evidence type="ECO:0000250" key="1">
    <source>
        <dbReference type="UniProtKB" id="P22061"/>
    </source>
</evidence>
<evidence type="ECO:0000250" key="2">
    <source>
        <dbReference type="UniProtKB" id="P23506"/>
    </source>
</evidence>
<evidence type="ECO:0000250" key="3">
    <source>
        <dbReference type="UniProtKB" id="Q27869"/>
    </source>
</evidence>
<evidence type="ECO:0000305" key="4"/>
<accession>P22062</accession>
<accession>Q5M7V6</accession>
<sequence>MAWKSGGASHSELIHNLRKNGIIKTDKVFEVMLATDRSHYAKSNPYMDSPQSIGFQATISAPHMHAYALELLFDQLHEGAKALDVGSGSGILTACFARMVGHSGKVIGIDHIKELVDDSITNVKKDDPMLLSSGRVRLVVGDGRMGFAEEAPYDAIHVGAAAPVVPQALIDQLKPGGRLILPVGPAGGNQMLEQYDKLQDGSVKMKPLMGVIYVPLTDKEKQWSRWK</sequence>
<gene>
    <name type="primary">Pcmt1</name>
</gene>
<reference key="1">
    <citation type="journal article" date="1989" name="Biochem. Biophys. Res. Commun.">
        <title>Primary structure of rat brain protein carboxyl methyltransferase deduced from cDNA sequence.</title>
        <authorList>
            <person name="Sato M."/>
            <person name="Yoshida T."/>
            <person name="Tuboi S."/>
        </authorList>
    </citation>
    <scope>NUCLEOTIDE SEQUENCE [MRNA]</scope>
    <source>
        <tissue>Brain</tissue>
    </source>
</reference>
<reference key="2">
    <citation type="journal article" date="1994" name="J. Neurochem.">
        <title>Tissue-specific expression of isoaspartyl protein carboxyl methyltransferase gene in rat brain and testis.</title>
        <authorList>
            <person name="Mizobuchi M."/>
            <person name="Murao K."/>
            <person name="Takeda R."/>
            <person name="Kakimoto Y."/>
        </authorList>
    </citation>
    <scope>NUCLEOTIDE SEQUENCE [MRNA]</scope>
</reference>
<reference key="3">
    <citation type="journal article" date="2004" name="Genome Res.">
        <title>The status, quality, and expansion of the NIH full-length cDNA project: the Mammalian Gene Collection (MGC).</title>
        <authorList>
            <consortium name="The MGC Project Team"/>
        </authorList>
    </citation>
    <scope>NUCLEOTIDE SEQUENCE [LARGE SCALE MRNA]</scope>
    <source>
        <tissue>Lung</tissue>
    </source>
</reference>
<reference key="4">
    <citation type="submission" date="2007-04" db="UniProtKB">
        <authorList>
            <person name="Lubec G."/>
            <person name="Afjehi-Sadat L."/>
            <person name="Chen W.-Q."/>
        </authorList>
    </citation>
    <scope>PROTEIN SEQUENCE OF 5-18; 28-37; 82-98; 106-135; 179-197 AND 205-219</scope>
    <scope>IDENTIFICATION BY MASS SPECTROMETRY</scope>
    <source>
        <strain>Sprague-Dawley</strain>
        <tissue>Hippocampus</tissue>
        <tissue>Spinal cord</tissue>
    </source>
</reference>
<name>PIMT_RAT</name>
<protein>
    <recommendedName>
        <fullName evidence="2">Protein-L-isoaspartate(D-aspartate) O-methyltransferase</fullName>
        <shortName>PIMT</shortName>
        <ecNumber evidence="2">2.1.1.77</ecNumber>
    </recommendedName>
    <alternativeName>
        <fullName>L-isoaspartyl protein carboxyl methyltransferase</fullName>
    </alternativeName>
    <alternativeName>
        <fullName>Protein L-isoaspartyl/D-aspartyl methyltransferase</fullName>
    </alternativeName>
    <alternativeName>
        <fullName>Protein-beta-aspartate methyltransferase</fullName>
    </alternativeName>
</protein>
<feature type="initiator methionine" description="Removed" evidence="1">
    <location>
        <position position="1"/>
    </location>
</feature>
<feature type="chain" id="PRO_0000111878" description="Protein-L-isoaspartate(D-aspartate) O-methyltransferase">
    <location>
        <begin position="2"/>
        <end position="227"/>
    </location>
</feature>
<feature type="active site" evidence="3">
    <location>
        <position position="60"/>
    </location>
</feature>
<feature type="binding site" evidence="1">
    <location>
        <begin position="57"/>
        <end position="60"/>
    </location>
    <ligand>
        <name>S-adenosyl-L-homocysteine</name>
        <dbReference type="ChEBI" id="CHEBI:57856"/>
    </ligand>
</feature>
<feature type="binding site" evidence="1">
    <location>
        <position position="65"/>
    </location>
    <ligand>
        <name>S-adenosyl-L-homocysteine</name>
        <dbReference type="ChEBI" id="CHEBI:57856"/>
    </ligand>
</feature>
<feature type="binding site" evidence="1">
    <location>
        <position position="89"/>
    </location>
    <ligand>
        <name>S-adenosyl-L-homocysteine</name>
        <dbReference type="ChEBI" id="CHEBI:57856"/>
    </ligand>
</feature>
<feature type="binding site" evidence="1">
    <location>
        <begin position="110"/>
        <end position="111"/>
    </location>
    <ligand>
        <name>S-adenosyl-L-homocysteine</name>
        <dbReference type="ChEBI" id="CHEBI:57856"/>
    </ligand>
</feature>
<feature type="binding site" evidence="1">
    <location>
        <begin position="142"/>
        <end position="143"/>
    </location>
    <ligand>
        <name>S-adenosyl-L-homocysteine</name>
        <dbReference type="ChEBI" id="CHEBI:57856"/>
    </ligand>
</feature>
<feature type="binding site" evidence="1">
    <location>
        <position position="217"/>
    </location>
    <ligand>
        <name>S-adenosyl-L-homocysteine</name>
        <dbReference type="ChEBI" id="CHEBI:57856"/>
    </ligand>
</feature>
<feature type="binding site" evidence="1">
    <location>
        <position position="222"/>
    </location>
    <ligand>
        <name>S-adenosyl-L-homocysteine</name>
        <dbReference type="ChEBI" id="CHEBI:57856"/>
    </ligand>
</feature>
<feature type="modified residue" description="N-acetylalanine" evidence="1">
    <location>
        <position position="2"/>
    </location>
</feature>
<feature type="sequence conflict" description="In Ref. 1; AAA60742 and 2; BAA02034." evidence="4" ref="1 2">
    <original>L</original>
    <variation>P</variation>
    <location>
        <position position="83"/>
    </location>
</feature>
<proteinExistence type="evidence at protein level"/>
<keyword id="KW-0007">Acetylation</keyword>
<keyword id="KW-0963">Cytoplasm</keyword>
<keyword id="KW-0903">Direct protein sequencing</keyword>
<keyword id="KW-0489">Methyltransferase</keyword>
<keyword id="KW-1185">Reference proteome</keyword>
<keyword id="KW-0949">S-adenosyl-L-methionine</keyword>
<keyword id="KW-0808">Transferase</keyword>
<organism>
    <name type="scientific">Rattus norvegicus</name>
    <name type="common">Rat</name>
    <dbReference type="NCBI Taxonomy" id="10116"/>
    <lineage>
        <taxon>Eukaryota</taxon>
        <taxon>Metazoa</taxon>
        <taxon>Chordata</taxon>
        <taxon>Craniata</taxon>
        <taxon>Vertebrata</taxon>
        <taxon>Euteleostomi</taxon>
        <taxon>Mammalia</taxon>
        <taxon>Eutheria</taxon>
        <taxon>Euarchontoglires</taxon>
        <taxon>Glires</taxon>
        <taxon>Rodentia</taxon>
        <taxon>Myomorpha</taxon>
        <taxon>Muroidea</taxon>
        <taxon>Muridae</taxon>
        <taxon>Murinae</taxon>
        <taxon>Rattus</taxon>
    </lineage>
</organism>